<gene>
    <name type="primary">rpmG1</name>
    <name type="synonym">rpmG</name>
    <name type="ordered locus">Rv2057c</name>
    <name type="ORF">MTCY63A.03</name>
</gene>
<reference key="1">
    <citation type="journal article" date="1998" name="Nature">
        <title>Deciphering the biology of Mycobacterium tuberculosis from the complete genome sequence.</title>
        <authorList>
            <person name="Cole S.T."/>
            <person name="Brosch R."/>
            <person name="Parkhill J."/>
            <person name="Garnier T."/>
            <person name="Churcher C.M."/>
            <person name="Harris D.E."/>
            <person name="Gordon S.V."/>
            <person name="Eiglmeier K."/>
            <person name="Gas S."/>
            <person name="Barry C.E. III"/>
            <person name="Tekaia F."/>
            <person name="Badcock K."/>
            <person name="Basham D."/>
            <person name="Brown D."/>
            <person name="Chillingworth T."/>
            <person name="Connor R."/>
            <person name="Davies R.M."/>
            <person name="Devlin K."/>
            <person name="Feltwell T."/>
            <person name="Gentles S."/>
            <person name="Hamlin N."/>
            <person name="Holroyd S."/>
            <person name="Hornsby T."/>
            <person name="Jagels K."/>
            <person name="Krogh A."/>
            <person name="McLean J."/>
            <person name="Moule S."/>
            <person name="Murphy L.D."/>
            <person name="Oliver S."/>
            <person name="Osborne J."/>
            <person name="Quail M.A."/>
            <person name="Rajandream M.A."/>
            <person name="Rogers J."/>
            <person name="Rutter S."/>
            <person name="Seeger K."/>
            <person name="Skelton S."/>
            <person name="Squares S."/>
            <person name="Squares R."/>
            <person name="Sulston J.E."/>
            <person name="Taylor K."/>
            <person name="Whitehead S."/>
            <person name="Barrell B.G."/>
        </authorList>
    </citation>
    <scope>NUCLEOTIDE SEQUENCE [LARGE SCALE GENOMIC DNA]</scope>
    <source>
        <strain>ATCC 25618 / H37Rv</strain>
    </source>
</reference>
<name>RL331_MYCTU</name>
<dbReference type="EMBL" id="AL123456">
    <property type="protein sequence ID" value="CCP44830.1"/>
    <property type="molecule type" value="Genomic_DNA"/>
</dbReference>
<dbReference type="PIR" id="H70945">
    <property type="entry name" value="H70945"/>
</dbReference>
<dbReference type="RefSeq" id="WP_003410628.1">
    <property type="nucleotide sequence ID" value="NZ_NVQJ01000047.1"/>
</dbReference>
<dbReference type="RefSeq" id="YP_177856.1">
    <property type="nucleotide sequence ID" value="NC_000962.3"/>
</dbReference>
<dbReference type="SMR" id="P9WH97"/>
<dbReference type="FunCoup" id="P9WH97">
    <property type="interactions" value="93"/>
</dbReference>
<dbReference type="STRING" id="83332.Rv2057c"/>
<dbReference type="PaxDb" id="83332-Rv2057c"/>
<dbReference type="DNASU" id="887807"/>
<dbReference type="GeneID" id="45426035"/>
<dbReference type="GeneID" id="887807"/>
<dbReference type="KEGG" id="mtu:Rv2057c"/>
<dbReference type="KEGG" id="mtv:RVBD_2057c"/>
<dbReference type="TubercuList" id="Rv2057c"/>
<dbReference type="eggNOG" id="COG0267">
    <property type="taxonomic scope" value="Bacteria"/>
</dbReference>
<dbReference type="InParanoid" id="P9WH97"/>
<dbReference type="OrthoDB" id="21586at2"/>
<dbReference type="PhylomeDB" id="P9WH97"/>
<dbReference type="PRO" id="PR:P9WH97"/>
<dbReference type="Proteomes" id="UP000001584">
    <property type="component" value="Chromosome"/>
</dbReference>
<dbReference type="GO" id="GO:0022625">
    <property type="term" value="C:cytosolic large ribosomal subunit"/>
    <property type="evidence" value="ECO:0000318"/>
    <property type="project" value="GO_Central"/>
</dbReference>
<dbReference type="GO" id="GO:0003735">
    <property type="term" value="F:structural constituent of ribosome"/>
    <property type="evidence" value="ECO:0000318"/>
    <property type="project" value="GO_Central"/>
</dbReference>
<dbReference type="GO" id="GO:0006412">
    <property type="term" value="P:translation"/>
    <property type="evidence" value="ECO:0007669"/>
    <property type="project" value="UniProtKB-UniRule"/>
</dbReference>
<dbReference type="FunFam" id="2.20.28.120:FF:000002">
    <property type="entry name" value="50S ribosomal protein L33"/>
    <property type="match status" value="1"/>
</dbReference>
<dbReference type="Gene3D" id="2.20.28.120">
    <property type="entry name" value="Ribosomal protein L33"/>
    <property type="match status" value="1"/>
</dbReference>
<dbReference type="HAMAP" id="MF_00294">
    <property type="entry name" value="Ribosomal_bL33"/>
    <property type="match status" value="1"/>
</dbReference>
<dbReference type="InterPro" id="IPR001705">
    <property type="entry name" value="Ribosomal_bL33"/>
</dbReference>
<dbReference type="InterPro" id="IPR018264">
    <property type="entry name" value="Ribosomal_bL33_CS"/>
</dbReference>
<dbReference type="InterPro" id="IPR038584">
    <property type="entry name" value="Ribosomal_bL33_sf"/>
</dbReference>
<dbReference type="InterPro" id="IPR011332">
    <property type="entry name" value="Ribosomal_zn-bd"/>
</dbReference>
<dbReference type="NCBIfam" id="NF001860">
    <property type="entry name" value="PRK00595.1"/>
    <property type="match status" value="1"/>
</dbReference>
<dbReference type="NCBIfam" id="TIGR01023">
    <property type="entry name" value="rpmG_bact"/>
    <property type="match status" value="1"/>
</dbReference>
<dbReference type="PANTHER" id="PTHR15238">
    <property type="entry name" value="54S RIBOSOMAL PROTEIN L39, MITOCHONDRIAL"/>
    <property type="match status" value="1"/>
</dbReference>
<dbReference type="PANTHER" id="PTHR15238:SF1">
    <property type="entry name" value="LARGE RIBOSOMAL SUBUNIT PROTEIN BL33M"/>
    <property type="match status" value="1"/>
</dbReference>
<dbReference type="Pfam" id="PF00471">
    <property type="entry name" value="Ribosomal_L33"/>
    <property type="match status" value="1"/>
</dbReference>
<dbReference type="SUPFAM" id="SSF57829">
    <property type="entry name" value="Zn-binding ribosomal proteins"/>
    <property type="match status" value="1"/>
</dbReference>
<dbReference type="PROSITE" id="PS00582">
    <property type="entry name" value="RIBOSOMAL_L33"/>
    <property type="match status" value="1"/>
</dbReference>
<proteinExistence type="inferred from homology"/>
<feature type="chain" id="PRO_0000170194" description="Large ribosomal subunit protein bL33A">
    <location>
        <begin position="1"/>
        <end position="54"/>
    </location>
</feature>
<accession>P9WH97</accession>
<accession>L0TB79</accession>
<accession>O86356</accession>
<accession>P0A5W0</accession>
<keyword id="KW-1185">Reference proteome</keyword>
<keyword id="KW-0687">Ribonucleoprotein</keyword>
<keyword id="KW-0689">Ribosomal protein</keyword>
<protein>
    <recommendedName>
        <fullName evidence="1">Large ribosomal subunit protein bL33A</fullName>
    </recommendedName>
    <alternativeName>
        <fullName>50S ribosomal protein L33 1</fullName>
    </alternativeName>
</protein>
<sequence length="54" mass="6589">MARTDIRPIVKLRSTAGTGYTYTTRKNRRNDPDRLILRKYDPILRRHVDFREER</sequence>
<organism>
    <name type="scientific">Mycobacterium tuberculosis (strain ATCC 25618 / H37Rv)</name>
    <dbReference type="NCBI Taxonomy" id="83332"/>
    <lineage>
        <taxon>Bacteria</taxon>
        <taxon>Bacillati</taxon>
        <taxon>Actinomycetota</taxon>
        <taxon>Actinomycetes</taxon>
        <taxon>Mycobacteriales</taxon>
        <taxon>Mycobacteriaceae</taxon>
        <taxon>Mycobacterium</taxon>
        <taxon>Mycobacterium tuberculosis complex</taxon>
    </lineage>
</organism>
<evidence type="ECO:0000255" key="1">
    <source>
        <dbReference type="HAMAP-Rule" id="MF_00294"/>
    </source>
</evidence>
<evidence type="ECO:0000305" key="2"/>
<comment type="similarity">
    <text evidence="2">Belongs to the bacterial ribosomal protein bL33 family.</text>
</comment>